<gene>
    <name evidence="1" type="primary">rplP</name>
    <name type="ordered locus">CTLon_0778</name>
</gene>
<comment type="function">
    <text evidence="1">Binds 23S rRNA and is also seen to make contacts with the A and possibly P site tRNAs.</text>
</comment>
<comment type="subunit">
    <text evidence="1">Part of the 50S ribosomal subunit.</text>
</comment>
<comment type="similarity">
    <text evidence="1">Belongs to the universal ribosomal protein uL16 family.</text>
</comment>
<evidence type="ECO:0000255" key="1">
    <source>
        <dbReference type="HAMAP-Rule" id="MF_01342"/>
    </source>
</evidence>
<evidence type="ECO:0000305" key="2"/>
<protein>
    <recommendedName>
        <fullName evidence="1">Large ribosomal subunit protein uL16</fullName>
    </recommendedName>
    <alternativeName>
        <fullName evidence="2">50S ribosomal protein L16</fullName>
    </alternativeName>
</protein>
<proteinExistence type="inferred from homology"/>
<name>RL16_CHLTB</name>
<feature type="chain" id="PRO_1000142946" description="Large ribosomal subunit protein uL16">
    <location>
        <begin position="1"/>
        <end position="138"/>
    </location>
</feature>
<sequence>MLMPKRTKFRKQQKGQFAGLSKGATFVDFGEFGMQTLERGWITSRQIEACRVAINRYLKRKGKVWIRVFPDKSVTKKPAETRMGKGKGAPDHWVAVVRPGRILFEVANVSKEDAQDALRRAAAKLGIRTRFVKRVERV</sequence>
<organism>
    <name type="scientific">Chlamydia trachomatis serovar L2b (strain UCH-1/proctitis)</name>
    <dbReference type="NCBI Taxonomy" id="471473"/>
    <lineage>
        <taxon>Bacteria</taxon>
        <taxon>Pseudomonadati</taxon>
        <taxon>Chlamydiota</taxon>
        <taxon>Chlamydiia</taxon>
        <taxon>Chlamydiales</taxon>
        <taxon>Chlamydiaceae</taxon>
        <taxon>Chlamydia/Chlamydophila group</taxon>
        <taxon>Chlamydia</taxon>
    </lineage>
</organism>
<accession>B0BCG0</accession>
<keyword id="KW-0687">Ribonucleoprotein</keyword>
<keyword id="KW-0689">Ribosomal protein</keyword>
<keyword id="KW-0694">RNA-binding</keyword>
<keyword id="KW-0699">rRNA-binding</keyword>
<keyword id="KW-0820">tRNA-binding</keyword>
<dbReference type="EMBL" id="AM884177">
    <property type="protein sequence ID" value="CAP07175.1"/>
    <property type="molecule type" value="Genomic_DNA"/>
</dbReference>
<dbReference type="RefSeq" id="WP_009872721.1">
    <property type="nucleotide sequence ID" value="NC_010280.2"/>
</dbReference>
<dbReference type="SMR" id="B0BCG0"/>
<dbReference type="GeneID" id="93065360"/>
<dbReference type="KEGG" id="ctl:CTLon_0778"/>
<dbReference type="HOGENOM" id="CLU_078858_2_1_0"/>
<dbReference type="Proteomes" id="UP001154401">
    <property type="component" value="Chromosome"/>
</dbReference>
<dbReference type="GO" id="GO:0022625">
    <property type="term" value="C:cytosolic large ribosomal subunit"/>
    <property type="evidence" value="ECO:0007669"/>
    <property type="project" value="TreeGrafter"/>
</dbReference>
<dbReference type="GO" id="GO:0019843">
    <property type="term" value="F:rRNA binding"/>
    <property type="evidence" value="ECO:0007669"/>
    <property type="project" value="UniProtKB-UniRule"/>
</dbReference>
<dbReference type="GO" id="GO:0003735">
    <property type="term" value="F:structural constituent of ribosome"/>
    <property type="evidence" value="ECO:0007669"/>
    <property type="project" value="InterPro"/>
</dbReference>
<dbReference type="GO" id="GO:0000049">
    <property type="term" value="F:tRNA binding"/>
    <property type="evidence" value="ECO:0007669"/>
    <property type="project" value="UniProtKB-KW"/>
</dbReference>
<dbReference type="GO" id="GO:0006412">
    <property type="term" value="P:translation"/>
    <property type="evidence" value="ECO:0007669"/>
    <property type="project" value="UniProtKB-UniRule"/>
</dbReference>
<dbReference type="CDD" id="cd01433">
    <property type="entry name" value="Ribosomal_L16_L10e"/>
    <property type="match status" value="1"/>
</dbReference>
<dbReference type="FunFam" id="3.90.1170.10:FF:000001">
    <property type="entry name" value="50S ribosomal protein L16"/>
    <property type="match status" value="1"/>
</dbReference>
<dbReference type="Gene3D" id="3.90.1170.10">
    <property type="entry name" value="Ribosomal protein L10e/L16"/>
    <property type="match status" value="1"/>
</dbReference>
<dbReference type="HAMAP" id="MF_01342">
    <property type="entry name" value="Ribosomal_uL16"/>
    <property type="match status" value="1"/>
</dbReference>
<dbReference type="InterPro" id="IPR047873">
    <property type="entry name" value="Ribosomal_uL16"/>
</dbReference>
<dbReference type="InterPro" id="IPR000114">
    <property type="entry name" value="Ribosomal_uL16_bact-type"/>
</dbReference>
<dbReference type="InterPro" id="IPR020798">
    <property type="entry name" value="Ribosomal_uL16_CS"/>
</dbReference>
<dbReference type="InterPro" id="IPR016180">
    <property type="entry name" value="Ribosomal_uL16_dom"/>
</dbReference>
<dbReference type="InterPro" id="IPR036920">
    <property type="entry name" value="Ribosomal_uL16_sf"/>
</dbReference>
<dbReference type="NCBIfam" id="TIGR01164">
    <property type="entry name" value="rplP_bact"/>
    <property type="match status" value="1"/>
</dbReference>
<dbReference type="PANTHER" id="PTHR12220">
    <property type="entry name" value="50S/60S RIBOSOMAL PROTEIN L16"/>
    <property type="match status" value="1"/>
</dbReference>
<dbReference type="PANTHER" id="PTHR12220:SF13">
    <property type="entry name" value="LARGE RIBOSOMAL SUBUNIT PROTEIN UL16M"/>
    <property type="match status" value="1"/>
</dbReference>
<dbReference type="Pfam" id="PF00252">
    <property type="entry name" value="Ribosomal_L16"/>
    <property type="match status" value="1"/>
</dbReference>
<dbReference type="PRINTS" id="PR00060">
    <property type="entry name" value="RIBOSOMALL16"/>
</dbReference>
<dbReference type="SUPFAM" id="SSF54686">
    <property type="entry name" value="Ribosomal protein L16p/L10e"/>
    <property type="match status" value="1"/>
</dbReference>
<dbReference type="PROSITE" id="PS00586">
    <property type="entry name" value="RIBOSOMAL_L16_1"/>
    <property type="match status" value="1"/>
</dbReference>
<dbReference type="PROSITE" id="PS00701">
    <property type="entry name" value="RIBOSOMAL_L16_2"/>
    <property type="match status" value="1"/>
</dbReference>
<reference key="1">
    <citation type="journal article" date="2008" name="Genome Res.">
        <title>Chlamydia trachomatis: genome sequence analysis of lymphogranuloma venereum isolates.</title>
        <authorList>
            <person name="Thomson N.R."/>
            <person name="Holden M.T.G."/>
            <person name="Carder C."/>
            <person name="Lennard N."/>
            <person name="Lockey S.J."/>
            <person name="Marsh P."/>
            <person name="Skipp P."/>
            <person name="O'Connor C.D."/>
            <person name="Goodhead I."/>
            <person name="Norbertzcak H."/>
            <person name="Harris B."/>
            <person name="Ormond D."/>
            <person name="Rance R."/>
            <person name="Quail M.A."/>
            <person name="Parkhill J."/>
            <person name="Stephens R.S."/>
            <person name="Clarke I.N."/>
        </authorList>
    </citation>
    <scope>NUCLEOTIDE SEQUENCE [LARGE SCALE GENOMIC DNA]</scope>
    <source>
        <strain>UCH-1/proctitis</strain>
    </source>
</reference>